<feature type="chain" id="PRO_1000016018" description="Aspartyl/glutamyl-tRNA(Asn/Gln) amidotransferase subunit B">
    <location>
        <begin position="1"/>
        <end position="490"/>
    </location>
</feature>
<comment type="function">
    <text evidence="1">Allows the formation of correctly charged Asn-tRNA(Asn) or Gln-tRNA(Gln) through the transamidation of misacylated Asp-tRNA(Asn) or Glu-tRNA(Gln) in organisms which lack either or both of asparaginyl-tRNA or glutaminyl-tRNA synthetases. The reaction takes place in the presence of glutamine and ATP through an activated phospho-Asp-tRNA(Asn) or phospho-Glu-tRNA(Gln).</text>
</comment>
<comment type="catalytic activity">
    <reaction evidence="1">
        <text>L-glutamyl-tRNA(Gln) + L-glutamine + ATP + H2O = L-glutaminyl-tRNA(Gln) + L-glutamate + ADP + phosphate + H(+)</text>
        <dbReference type="Rhea" id="RHEA:17521"/>
        <dbReference type="Rhea" id="RHEA-COMP:9681"/>
        <dbReference type="Rhea" id="RHEA-COMP:9684"/>
        <dbReference type="ChEBI" id="CHEBI:15377"/>
        <dbReference type="ChEBI" id="CHEBI:15378"/>
        <dbReference type="ChEBI" id="CHEBI:29985"/>
        <dbReference type="ChEBI" id="CHEBI:30616"/>
        <dbReference type="ChEBI" id="CHEBI:43474"/>
        <dbReference type="ChEBI" id="CHEBI:58359"/>
        <dbReference type="ChEBI" id="CHEBI:78520"/>
        <dbReference type="ChEBI" id="CHEBI:78521"/>
        <dbReference type="ChEBI" id="CHEBI:456216"/>
    </reaction>
</comment>
<comment type="catalytic activity">
    <reaction evidence="1">
        <text>L-aspartyl-tRNA(Asn) + L-glutamine + ATP + H2O = L-asparaginyl-tRNA(Asn) + L-glutamate + ADP + phosphate + 2 H(+)</text>
        <dbReference type="Rhea" id="RHEA:14513"/>
        <dbReference type="Rhea" id="RHEA-COMP:9674"/>
        <dbReference type="Rhea" id="RHEA-COMP:9677"/>
        <dbReference type="ChEBI" id="CHEBI:15377"/>
        <dbReference type="ChEBI" id="CHEBI:15378"/>
        <dbReference type="ChEBI" id="CHEBI:29985"/>
        <dbReference type="ChEBI" id="CHEBI:30616"/>
        <dbReference type="ChEBI" id="CHEBI:43474"/>
        <dbReference type="ChEBI" id="CHEBI:58359"/>
        <dbReference type="ChEBI" id="CHEBI:78515"/>
        <dbReference type="ChEBI" id="CHEBI:78516"/>
        <dbReference type="ChEBI" id="CHEBI:456216"/>
    </reaction>
</comment>
<comment type="subunit">
    <text evidence="1">Heterotrimer of A, B and C subunits.</text>
</comment>
<comment type="similarity">
    <text evidence="1">Belongs to the GatB/GatE family. GatB subfamily.</text>
</comment>
<proteinExistence type="inferred from homology"/>
<name>GATB_PROM5</name>
<organism>
    <name type="scientific">Prochlorococcus marinus (strain MIT 9515)</name>
    <dbReference type="NCBI Taxonomy" id="167542"/>
    <lineage>
        <taxon>Bacteria</taxon>
        <taxon>Bacillati</taxon>
        <taxon>Cyanobacteriota</taxon>
        <taxon>Cyanophyceae</taxon>
        <taxon>Synechococcales</taxon>
        <taxon>Prochlorococcaceae</taxon>
        <taxon>Prochlorococcus</taxon>
    </lineage>
</organism>
<protein>
    <recommendedName>
        <fullName evidence="1">Aspartyl/glutamyl-tRNA(Asn/Gln) amidotransferase subunit B</fullName>
        <shortName evidence="1">Asp/Glu-ADT subunit B</shortName>
        <ecNumber evidence="1">6.3.5.-</ecNumber>
    </recommendedName>
</protein>
<accession>A2BU03</accession>
<keyword id="KW-0067">ATP-binding</keyword>
<keyword id="KW-0436">Ligase</keyword>
<keyword id="KW-0547">Nucleotide-binding</keyword>
<keyword id="KW-0648">Protein biosynthesis</keyword>
<reference key="1">
    <citation type="journal article" date="2007" name="PLoS Genet.">
        <title>Patterns and implications of gene gain and loss in the evolution of Prochlorococcus.</title>
        <authorList>
            <person name="Kettler G.C."/>
            <person name="Martiny A.C."/>
            <person name="Huang K."/>
            <person name="Zucker J."/>
            <person name="Coleman M.L."/>
            <person name="Rodrigue S."/>
            <person name="Chen F."/>
            <person name="Lapidus A."/>
            <person name="Ferriera S."/>
            <person name="Johnson J."/>
            <person name="Steglich C."/>
            <person name="Church G.M."/>
            <person name="Richardson P."/>
            <person name="Chisholm S.W."/>
        </authorList>
    </citation>
    <scope>NUCLEOTIDE SEQUENCE [LARGE SCALE GENOMIC DNA]</scope>
    <source>
        <strain>MIT 9515</strain>
    </source>
</reference>
<gene>
    <name evidence="1" type="primary">gatB</name>
    <name type="ordered locus">P9515_00551</name>
</gene>
<sequence length="490" mass="55258">MKNLDPWEAVIGLETHVQLNTKSKIFTSASTAFGDEPNTHVDPVVCGLPGTLPVLNETVLEYAVKTSLALNLNVAEHCKFDRKQYFYPDLPKNYQISQFDEPLAENGWLEVEIAEKDKETYLKKIGIERLHMEEDAGKLVHAGSDRLAGSKYSLVDYNRAGIALVEIVSKPDIRTGREASEYASEIRRTVRYLGVSDGNMQEGSLRCDVNISVRRGPDSPFGTKVEIKNMNSFSAIQKACEYEIKRQIDVYENGGEIFQETRLWDEAKQLTKSMRLKEGSSDYRYFPDPDLGPIEISKEQKDQWLNELPELPSKKRHKYVKEFGLSPYDSRVISDEVFMANFFEETVANGADPKLASNWITSDIVGYLKSNKQIFADLKLSPIYLAEMINLISEKVISGKIAKDILPELIKKNISPQKLVKEKGLAMISDSDSILPIIEDLINEFPKEVASFKEGKTKLLGFFVGQLMKKTKGKVDPKLANKLLAEKLNS</sequence>
<dbReference type="EC" id="6.3.5.-" evidence="1"/>
<dbReference type="EMBL" id="CP000552">
    <property type="protein sequence ID" value="ABM71264.1"/>
    <property type="molecule type" value="Genomic_DNA"/>
</dbReference>
<dbReference type="RefSeq" id="WP_011819381.1">
    <property type="nucleotide sequence ID" value="NC_008817.1"/>
</dbReference>
<dbReference type="SMR" id="A2BU03"/>
<dbReference type="STRING" id="167542.P9515_00551"/>
<dbReference type="GeneID" id="60201896"/>
<dbReference type="KEGG" id="pmc:P9515_00551"/>
<dbReference type="eggNOG" id="COG0064">
    <property type="taxonomic scope" value="Bacteria"/>
</dbReference>
<dbReference type="HOGENOM" id="CLU_019240_0_0_3"/>
<dbReference type="OrthoDB" id="9804078at2"/>
<dbReference type="Proteomes" id="UP000001589">
    <property type="component" value="Chromosome"/>
</dbReference>
<dbReference type="GO" id="GO:0050566">
    <property type="term" value="F:asparaginyl-tRNA synthase (glutamine-hydrolyzing) activity"/>
    <property type="evidence" value="ECO:0007669"/>
    <property type="project" value="RHEA"/>
</dbReference>
<dbReference type="GO" id="GO:0005524">
    <property type="term" value="F:ATP binding"/>
    <property type="evidence" value="ECO:0007669"/>
    <property type="project" value="UniProtKB-KW"/>
</dbReference>
<dbReference type="GO" id="GO:0050567">
    <property type="term" value="F:glutaminyl-tRNA synthase (glutamine-hydrolyzing) activity"/>
    <property type="evidence" value="ECO:0007669"/>
    <property type="project" value="UniProtKB-UniRule"/>
</dbReference>
<dbReference type="GO" id="GO:0070681">
    <property type="term" value="P:glutaminyl-tRNAGln biosynthesis via transamidation"/>
    <property type="evidence" value="ECO:0007669"/>
    <property type="project" value="TreeGrafter"/>
</dbReference>
<dbReference type="GO" id="GO:0006412">
    <property type="term" value="P:translation"/>
    <property type="evidence" value="ECO:0007669"/>
    <property type="project" value="UniProtKB-UniRule"/>
</dbReference>
<dbReference type="FunFam" id="1.10.10.410:FF:000001">
    <property type="entry name" value="Aspartyl/glutamyl-tRNA(Asn/Gln) amidotransferase subunit B"/>
    <property type="match status" value="1"/>
</dbReference>
<dbReference type="FunFam" id="1.10.150.380:FF:000001">
    <property type="entry name" value="Aspartyl/glutamyl-tRNA(Asn/Gln) amidotransferase subunit B"/>
    <property type="match status" value="1"/>
</dbReference>
<dbReference type="Gene3D" id="1.10.10.410">
    <property type="match status" value="1"/>
</dbReference>
<dbReference type="Gene3D" id="1.10.150.380">
    <property type="entry name" value="GatB domain, N-terminal subdomain"/>
    <property type="match status" value="1"/>
</dbReference>
<dbReference type="HAMAP" id="MF_00121">
    <property type="entry name" value="GatB"/>
    <property type="match status" value="1"/>
</dbReference>
<dbReference type="InterPro" id="IPR017959">
    <property type="entry name" value="Asn/Gln-tRNA_amidoTrfase_suB/E"/>
</dbReference>
<dbReference type="InterPro" id="IPR006075">
    <property type="entry name" value="Asn/Gln-tRNA_Trfase_suB/E_cat"/>
</dbReference>
<dbReference type="InterPro" id="IPR018027">
    <property type="entry name" value="Asn/Gln_amidotransferase"/>
</dbReference>
<dbReference type="InterPro" id="IPR003789">
    <property type="entry name" value="Asn/Gln_tRNA_amidoTrase-B-like"/>
</dbReference>
<dbReference type="InterPro" id="IPR004413">
    <property type="entry name" value="GatB"/>
</dbReference>
<dbReference type="InterPro" id="IPR042114">
    <property type="entry name" value="GatB_C_1"/>
</dbReference>
<dbReference type="InterPro" id="IPR023168">
    <property type="entry name" value="GatB_Yqey_C_2"/>
</dbReference>
<dbReference type="InterPro" id="IPR017958">
    <property type="entry name" value="Gln-tRNA_amidoTrfase_suB_CS"/>
</dbReference>
<dbReference type="InterPro" id="IPR014746">
    <property type="entry name" value="Gln_synth/guanido_kin_cat_dom"/>
</dbReference>
<dbReference type="NCBIfam" id="TIGR00133">
    <property type="entry name" value="gatB"/>
    <property type="match status" value="1"/>
</dbReference>
<dbReference type="NCBIfam" id="NF004012">
    <property type="entry name" value="PRK05477.1-2"/>
    <property type="match status" value="1"/>
</dbReference>
<dbReference type="NCBIfam" id="NF004014">
    <property type="entry name" value="PRK05477.1-4"/>
    <property type="match status" value="1"/>
</dbReference>
<dbReference type="PANTHER" id="PTHR11659">
    <property type="entry name" value="GLUTAMYL-TRNA GLN AMIDOTRANSFERASE SUBUNIT B MITOCHONDRIAL AND PROKARYOTIC PET112-RELATED"/>
    <property type="match status" value="1"/>
</dbReference>
<dbReference type="PANTHER" id="PTHR11659:SF0">
    <property type="entry name" value="GLUTAMYL-TRNA(GLN) AMIDOTRANSFERASE SUBUNIT B, MITOCHONDRIAL"/>
    <property type="match status" value="1"/>
</dbReference>
<dbReference type="Pfam" id="PF02934">
    <property type="entry name" value="GatB_N"/>
    <property type="match status" value="1"/>
</dbReference>
<dbReference type="Pfam" id="PF02637">
    <property type="entry name" value="GatB_Yqey"/>
    <property type="match status" value="1"/>
</dbReference>
<dbReference type="SMART" id="SM00845">
    <property type="entry name" value="GatB_Yqey"/>
    <property type="match status" value="1"/>
</dbReference>
<dbReference type="SUPFAM" id="SSF89095">
    <property type="entry name" value="GatB/YqeY motif"/>
    <property type="match status" value="1"/>
</dbReference>
<dbReference type="SUPFAM" id="SSF55931">
    <property type="entry name" value="Glutamine synthetase/guanido kinase"/>
    <property type="match status" value="1"/>
</dbReference>
<dbReference type="PROSITE" id="PS01234">
    <property type="entry name" value="GATB"/>
    <property type="match status" value="1"/>
</dbReference>
<evidence type="ECO:0000255" key="1">
    <source>
        <dbReference type="HAMAP-Rule" id="MF_00121"/>
    </source>
</evidence>